<sequence length="46" mass="5521">MQVLNSLRNAKQRHPDCQIVKRKGRLYVICKTNPRFKAVQGRKKRR</sequence>
<dbReference type="EMBL" id="CP001144">
    <property type="protein sequence ID" value="ACH75522.1"/>
    <property type="molecule type" value="Genomic_DNA"/>
</dbReference>
<dbReference type="SMR" id="B5FKX4"/>
<dbReference type="KEGG" id="sed:SeD_A0514"/>
<dbReference type="HOGENOM" id="CLU_135723_3_1_6"/>
<dbReference type="Proteomes" id="UP000008322">
    <property type="component" value="Chromosome"/>
</dbReference>
<dbReference type="GO" id="GO:1990904">
    <property type="term" value="C:ribonucleoprotein complex"/>
    <property type="evidence" value="ECO:0007669"/>
    <property type="project" value="UniProtKB-KW"/>
</dbReference>
<dbReference type="GO" id="GO:0005840">
    <property type="term" value="C:ribosome"/>
    <property type="evidence" value="ECO:0007669"/>
    <property type="project" value="UniProtKB-KW"/>
</dbReference>
<dbReference type="GO" id="GO:0003735">
    <property type="term" value="F:structural constituent of ribosome"/>
    <property type="evidence" value="ECO:0007669"/>
    <property type="project" value="InterPro"/>
</dbReference>
<dbReference type="GO" id="GO:0006412">
    <property type="term" value="P:translation"/>
    <property type="evidence" value="ECO:0007669"/>
    <property type="project" value="UniProtKB-UniRule"/>
</dbReference>
<dbReference type="HAMAP" id="MF_00251">
    <property type="entry name" value="Ribosomal_bL36"/>
    <property type="match status" value="1"/>
</dbReference>
<dbReference type="InterPro" id="IPR000473">
    <property type="entry name" value="Ribosomal_bL36"/>
</dbReference>
<dbReference type="InterPro" id="IPR035977">
    <property type="entry name" value="Ribosomal_bL36_sp"/>
</dbReference>
<dbReference type="InterPro" id="IPR047621">
    <property type="entry name" value="Ribosomal_L36_bact"/>
</dbReference>
<dbReference type="NCBIfam" id="NF002021">
    <property type="entry name" value="PRK00831.1"/>
    <property type="match status" value="1"/>
</dbReference>
<dbReference type="NCBIfam" id="TIGR01022">
    <property type="entry name" value="rpmJ_bact"/>
    <property type="match status" value="1"/>
</dbReference>
<dbReference type="PANTHER" id="PTHR47781">
    <property type="entry name" value="50S RIBOSOMAL PROTEIN L36 2"/>
    <property type="match status" value="1"/>
</dbReference>
<dbReference type="PANTHER" id="PTHR47781:SF1">
    <property type="entry name" value="LARGE RIBOSOMAL SUBUNIT PROTEIN BL36B"/>
    <property type="match status" value="1"/>
</dbReference>
<dbReference type="Pfam" id="PF00444">
    <property type="entry name" value="Ribosomal_L36"/>
    <property type="match status" value="1"/>
</dbReference>
<dbReference type="SUPFAM" id="SSF57840">
    <property type="entry name" value="Ribosomal protein L36"/>
    <property type="match status" value="1"/>
</dbReference>
<dbReference type="PROSITE" id="PS00828">
    <property type="entry name" value="RIBOSOMAL_L36"/>
    <property type="match status" value="1"/>
</dbReference>
<reference key="1">
    <citation type="journal article" date="2011" name="J. Bacteriol.">
        <title>Comparative genomics of 28 Salmonella enterica isolates: evidence for CRISPR-mediated adaptive sublineage evolution.</title>
        <authorList>
            <person name="Fricke W.F."/>
            <person name="Mammel M.K."/>
            <person name="McDermott P.F."/>
            <person name="Tartera C."/>
            <person name="White D.G."/>
            <person name="Leclerc J.E."/>
            <person name="Ravel J."/>
            <person name="Cebula T.A."/>
        </authorList>
    </citation>
    <scope>NUCLEOTIDE SEQUENCE [LARGE SCALE GENOMIC DNA]</scope>
    <source>
        <strain>CT_02021853</strain>
    </source>
</reference>
<proteinExistence type="inferred from homology"/>
<name>RL36_SALDC</name>
<comment type="similarity">
    <text evidence="1">Belongs to the bacterial ribosomal protein bL36 family.</text>
</comment>
<gene>
    <name evidence="1" type="primary">rpmJ</name>
    <name type="ordered locus">SeD_A0514</name>
</gene>
<evidence type="ECO:0000255" key="1">
    <source>
        <dbReference type="HAMAP-Rule" id="MF_00251"/>
    </source>
</evidence>
<evidence type="ECO:0000305" key="2"/>
<organism>
    <name type="scientific">Salmonella dublin (strain CT_02021853)</name>
    <dbReference type="NCBI Taxonomy" id="439851"/>
    <lineage>
        <taxon>Bacteria</taxon>
        <taxon>Pseudomonadati</taxon>
        <taxon>Pseudomonadota</taxon>
        <taxon>Gammaproteobacteria</taxon>
        <taxon>Enterobacterales</taxon>
        <taxon>Enterobacteriaceae</taxon>
        <taxon>Salmonella</taxon>
    </lineage>
</organism>
<protein>
    <recommendedName>
        <fullName evidence="1">Large ribosomal subunit protein bL36</fullName>
    </recommendedName>
    <alternativeName>
        <fullName evidence="2">50S ribosomal protein L36</fullName>
    </alternativeName>
</protein>
<accession>B5FKX4</accession>
<feature type="chain" id="PRO_1000101066" description="Large ribosomal subunit protein bL36">
    <location>
        <begin position="1"/>
        <end position="46"/>
    </location>
</feature>
<keyword id="KW-0687">Ribonucleoprotein</keyword>
<keyword id="KW-0689">Ribosomal protein</keyword>